<name>GSH1_PSEPW</name>
<proteinExistence type="inferred from homology"/>
<reference key="1">
    <citation type="submission" date="2008-02" db="EMBL/GenBank/DDBJ databases">
        <title>Complete sequence of Pseudomonas putida W619.</title>
        <authorList>
            <person name="Copeland A."/>
            <person name="Lucas S."/>
            <person name="Lapidus A."/>
            <person name="Barry K."/>
            <person name="Detter J.C."/>
            <person name="Glavina del Rio T."/>
            <person name="Dalin E."/>
            <person name="Tice H."/>
            <person name="Pitluck S."/>
            <person name="Chain P."/>
            <person name="Malfatti S."/>
            <person name="Shin M."/>
            <person name="Vergez L."/>
            <person name="Schmutz J."/>
            <person name="Larimer F."/>
            <person name="Land M."/>
            <person name="Hauser L."/>
            <person name="Kyrpides N."/>
            <person name="Kim E."/>
            <person name="Taghavi S."/>
            <person name="Vangronsveld D."/>
            <person name="van der Lelie D."/>
            <person name="Richardson P."/>
        </authorList>
    </citation>
    <scope>NUCLEOTIDE SEQUENCE [LARGE SCALE GENOMIC DNA]</scope>
    <source>
        <strain>W619</strain>
    </source>
</reference>
<gene>
    <name evidence="1" type="primary">gshA</name>
    <name type="ordered locus">PputW619_4969</name>
</gene>
<organism>
    <name type="scientific">Pseudomonas putida (strain W619)</name>
    <dbReference type="NCBI Taxonomy" id="390235"/>
    <lineage>
        <taxon>Bacteria</taxon>
        <taxon>Pseudomonadati</taxon>
        <taxon>Pseudomonadota</taxon>
        <taxon>Gammaproteobacteria</taxon>
        <taxon>Pseudomonadales</taxon>
        <taxon>Pseudomonadaceae</taxon>
        <taxon>Pseudomonas</taxon>
    </lineage>
</organism>
<keyword id="KW-0067">ATP-binding</keyword>
<keyword id="KW-0317">Glutathione biosynthesis</keyword>
<keyword id="KW-0436">Ligase</keyword>
<keyword id="KW-0547">Nucleotide-binding</keyword>
<evidence type="ECO:0000255" key="1">
    <source>
        <dbReference type="HAMAP-Rule" id="MF_00578"/>
    </source>
</evidence>
<dbReference type="EC" id="6.3.2.2" evidence="1"/>
<dbReference type="EMBL" id="CP000949">
    <property type="protein sequence ID" value="ACA75445.1"/>
    <property type="molecule type" value="Genomic_DNA"/>
</dbReference>
<dbReference type="SMR" id="B1JET4"/>
<dbReference type="STRING" id="390235.PputW619_4969"/>
<dbReference type="KEGG" id="ppw:PputW619_4969"/>
<dbReference type="eggNOG" id="COG2918">
    <property type="taxonomic scope" value="Bacteria"/>
</dbReference>
<dbReference type="HOGENOM" id="CLU_020728_3_0_6"/>
<dbReference type="UniPathway" id="UPA00142">
    <property type="reaction ID" value="UER00209"/>
</dbReference>
<dbReference type="GO" id="GO:0005829">
    <property type="term" value="C:cytosol"/>
    <property type="evidence" value="ECO:0007669"/>
    <property type="project" value="TreeGrafter"/>
</dbReference>
<dbReference type="GO" id="GO:0005524">
    <property type="term" value="F:ATP binding"/>
    <property type="evidence" value="ECO:0007669"/>
    <property type="project" value="UniProtKB-KW"/>
</dbReference>
<dbReference type="GO" id="GO:0004357">
    <property type="term" value="F:glutamate-cysteine ligase activity"/>
    <property type="evidence" value="ECO:0007669"/>
    <property type="project" value="UniProtKB-UniRule"/>
</dbReference>
<dbReference type="GO" id="GO:0046872">
    <property type="term" value="F:metal ion binding"/>
    <property type="evidence" value="ECO:0007669"/>
    <property type="project" value="TreeGrafter"/>
</dbReference>
<dbReference type="GO" id="GO:0006750">
    <property type="term" value="P:glutathione biosynthetic process"/>
    <property type="evidence" value="ECO:0007669"/>
    <property type="project" value="UniProtKB-UniRule"/>
</dbReference>
<dbReference type="Gene3D" id="3.30.590.20">
    <property type="match status" value="1"/>
</dbReference>
<dbReference type="HAMAP" id="MF_00578">
    <property type="entry name" value="Glu_cys_ligase"/>
    <property type="match status" value="1"/>
</dbReference>
<dbReference type="InterPro" id="IPR014746">
    <property type="entry name" value="Gln_synth/guanido_kin_cat_dom"/>
</dbReference>
<dbReference type="InterPro" id="IPR007370">
    <property type="entry name" value="Glu_cys_ligase"/>
</dbReference>
<dbReference type="InterPro" id="IPR006334">
    <property type="entry name" value="Glut_cys_ligase"/>
</dbReference>
<dbReference type="NCBIfam" id="TIGR01434">
    <property type="entry name" value="glu_cys_ligase"/>
    <property type="match status" value="1"/>
</dbReference>
<dbReference type="PANTHER" id="PTHR38761">
    <property type="entry name" value="GLUTAMATE--CYSTEINE LIGASE"/>
    <property type="match status" value="1"/>
</dbReference>
<dbReference type="PANTHER" id="PTHR38761:SF1">
    <property type="entry name" value="GLUTAMATE--CYSTEINE LIGASE"/>
    <property type="match status" value="1"/>
</dbReference>
<dbReference type="Pfam" id="PF04262">
    <property type="entry name" value="Glu_cys_ligase"/>
    <property type="match status" value="1"/>
</dbReference>
<dbReference type="SUPFAM" id="SSF55931">
    <property type="entry name" value="Glutamine synthetase/guanido kinase"/>
    <property type="match status" value="1"/>
</dbReference>
<feature type="chain" id="PRO_1000129600" description="Glutamate--cysteine ligase">
    <location>
        <begin position="1"/>
        <end position="525"/>
    </location>
</feature>
<protein>
    <recommendedName>
        <fullName evidence="1">Glutamate--cysteine ligase</fullName>
        <ecNumber evidence="1">6.3.2.2</ecNumber>
    </recommendedName>
    <alternativeName>
        <fullName evidence="1">Gamma-ECS</fullName>
        <shortName evidence="1">GCS</shortName>
    </alternativeName>
    <alternativeName>
        <fullName evidence="1">Gamma-glutamylcysteine synthetase</fullName>
    </alternativeName>
</protein>
<sequence length="525" mass="58932">MSDLLNRRLSLLGANLPLLKQCLHGIERECLRVTDEGRLAQTPHPESLGSALTNEQITTDYSESLLEFITPALPDPAQVLESLEQTHRFVYSKLGDELLWSPSMPCTLPAEEDIPIAEYGASNIGKLKHVYRKGLALRYGRTMQCIAGIHYNFSLPEALWPLLRASDGNEQSDRDYQSAAYIALIRNFRRYSWLLMYLFGASPALDKGFLRGRPHQLEELDAETLYLPYATSLRMSDLGYQSNAQAGLTPCYNNLASYTDSLRKAVGTPYPPYVEIGTHVDGEWVQLNTNILQIENEYYSNIRPKRVTYTGERPIQALTSRGVQYVEVRCLDINPFLPVGIDLTEARFLDAFLLFCALEDSPLLDNGECGQCTDNFLTVVKEGRRPGLELRRDGHPIELKAWASDLLGRIGQLAELLDRAQGGDEHAKALAAQQAKVDDASLTPSAQVLARMGEHEESFIQFSLRQSRLHAETFREQPLPTERQQAYETLARNSLAEQSRLEQEEVGDFDLFVGAYQASILAISN</sequence>
<accession>B1JET4</accession>
<comment type="catalytic activity">
    <reaction evidence="1">
        <text>L-cysteine + L-glutamate + ATP = gamma-L-glutamyl-L-cysteine + ADP + phosphate + H(+)</text>
        <dbReference type="Rhea" id="RHEA:13285"/>
        <dbReference type="ChEBI" id="CHEBI:15378"/>
        <dbReference type="ChEBI" id="CHEBI:29985"/>
        <dbReference type="ChEBI" id="CHEBI:30616"/>
        <dbReference type="ChEBI" id="CHEBI:35235"/>
        <dbReference type="ChEBI" id="CHEBI:43474"/>
        <dbReference type="ChEBI" id="CHEBI:58173"/>
        <dbReference type="ChEBI" id="CHEBI:456216"/>
        <dbReference type="EC" id="6.3.2.2"/>
    </reaction>
</comment>
<comment type="pathway">
    <text evidence="1">Sulfur metabolism; glutathione biosynthesis; glutathione from L-cysteine and L-glutamate: step 1/2.</text>
</comment>
<comment type="similarity">
    <text evidence="1">Belongs to the glutamate--cysteine ligase type 1 family. Type 1 subfamily.</text>
</comment>